<protein>
    <recommendedName>
        <fullName>ATP synthase subunit d, mitochondrial</fullName>
    </recommendedName>
</protein>
<dbReference type="EMBL" id="AF019223">
    <property type="protein sequence ID" value="AAC64861.1"/>
    <property type="molecule type" value="Genomic_DNA"/>
</dbReference>
<dbReference type="EMBL" id="CR382125">
    <property type="protein sequence ID" value="CAG99854.1"/>
    <property type="molecule type" value="Genomic_DNA"/>
</dbReference>
<dbReference type="RefSeq" id="XP_454767.1">
    <property type="nucleotide sequence ID" value="XM_454767.1"/>
</dbReference>
<dbReference type="SMR" id="O13350"/>
<dbReference type="FunCoup" id="O13350">
    <property type="interactions" value="582"/>
</dbReference>
<dbReference type="STRING" id="284590.O13350"/>
<dbReference type="PaxDb" id="284590-O13350"/>
<dbReference type="KEGG" id="kla:KLLA0_E18107g"/>
<dbReference type="eggNOG" id="KOG3366">
    <property type="taxonomic scope" value="Eukaryota"/>
</dbReference>
<dbReference type="HOGENOM" id="CLU_080463_0_0_1"/>
<dbReference type="InParanoid" id="O13350"/>
<dbReference type="OMA" id="VSKGRWA"/>
<dbReference type="Proteomes" id="UP000000598">
    <property type="component" value="Chromosome E"/>
</dbReference>
<dbReference type="GO" id="GO:0005743">
    <property type="term" value="C:mitochondrial inner membrane"/>
    <property type="evidence" value="ECO:0007669"/>
    <property type="project" value="UniProtKB-SubCell"/>
</dbReference>
<dbReference type="GO" id="GO:0045259">
    <property type="term" value="C:proton-transporting ATP synthase complex"/>
    <property type="evidence" value="ECO:0007669"/>
    <property type="project" value="UniProtKB-KW"/>
</dbReference>
<dbReference type="GO" id="GO:0015078">
    <property type="term" value="F:proton transmembrane transporter activity"/>
    <property type="evidence" value="ECO:0007669"/>
    <property type="project" value="InterPro"/>
</dbReference>
<dbReference type="GO" id="GO:0015986">
    <property type="term" value="P:proton motive force-driven ATP synthesis"/>
    <property type="evidence" value="ECO:0007669"/>
    <property type="project" value="InterPro"/>
</dbReference>
<dbReference type="Gene3D" id="6.10.280.70">
    <property type="match status" value="1"/>
</dbReference>
<dbReference type="InterPro" id="IPR008689">
    <property type="entry name" value="ATP_synth_F0_dsu_mt"/>
</dbReference>
<dbReference type="InterPro" id="IPR036228">
    <property type="entry name" value="ATP_synth_F0_dsu_sf_mt"/>
</dbReference>
<dbReference type="PANTHER" id="PTHR12700">
    <property type="entry name" value="ATP SYNTHASE SUBUNIT D, MITOCHONDRIAL"/>
    <property type="match status" value="1"/>
</dbReference>
<dbReference type="Pfam" id="PF05873">
    <property type="entry name" value="Mt_ATP-synt_D"/>
    <property type="match status" value="1"/>
</dbReference>
<dbReference type="PIRSF" id="PIRSF005514">
    <property type="entry name" value="ATPase_F0_D_mt"/>
    <property type="match status" value="1"/>
</dbReference>
<dbReference type="SUPFAM" id="SSF161065">
    <property type="entry name" value="ATP synthase D chain-like"/>
    <property type="match status" value="1"/>
</dbReference>
<sequence>MSLAKSAANKLDWAKVISSLKLTGKTATQLSSFKKRNDEARRQLLELQSQPTSVDFSHYRSVLKNTEVVDKIEQFYKSYKPVSVDVSKQLSTIEAFESQAIENAAETEKLVAQELKDLKETLNNIESARPFDQLTVDELTKARPEIDAKVEEMVKKGRWDVPGYKEKFGDLTIM</sequence>
<evidence type="ECO:0000250" key="1"/>
<evidence type="ECO:0000305" key="2"/>
<organism>
    <name type="scientific">Kluyveromyces lactis (strain ATCC 8585 / CBS 2359 / DSM 70799 / NBRC 1267 / NRRL Y-1140 / WM37)</name>
    <name type="common">Yeast</name>
    <name type="synonym">Candida sphaerica</name>
    <dbReference type="NCBI Taxonomy" id="284590"/>
    <lineage>
        <taxon>Eukaryota</taxon>
        <taxon>Fungi</taxon>
        <taxon>Dikarya</taxon>
        <taxon>Ascomycota</taxon>
        <taxon>Saccharomycotina</taxon>
        <taxon>Saccharomycetes</taxon>
        <taxon>Saccharomycetales</taxon>
        <taxon>Saccharomycetaceae</taxon>
        <taxon>Kluyveromyces</taxon>
    </lineage>
</organism>
<reference key="1">
    <citation type="journal article" date="1998" name="Mol. Gen. Genet.">
        <title>Suppression of rho0 lethality by mitochondrial ATP synthase F1 mutations in Kluyveromyces lactis occurs in the absence of F0.</title>
        <authorList>
            <person name="Chen X.J."/>
            <person name="Hansbro P.M."/>
            <person name="Clark-Walker G.D."/>
        </authorList>
    </citation>
    <scope>NUCLEOTIDE SEQUENCE [GENOMIC DNA]</scope>
    <source>
        <strain>ATCC 76492 / CBS 2359/152 / CLIB 210</strain>
    </source>
</reference>
<reference key="2">
    <citation type="journal article" date="2004" name="Nature">
        <title>Genome evolution in yeasts.</title>
        <authorList>
            <person name="Dujon B."/>
            <person name="Sherman D."/>
            <person name="Fischer G."/>
            <person name="Durrens P."/>
            <person name="Casaregola S."/>
            <person name="Lafontaine I."/>
            <person name="de Montigny J."/>
            <person name="Marck C."/>
            <person name="Neuveglise C."/>
            <person name="Talla E."/>
            <person name="Goffard N."/>
            <person name="Frangeul L."/>
            <person name="Aigle M."/>
            <person name="Anthouard V."/>
            <person name="Babour A."/>
            <person name="Barbe V."/>
            <person name="Barnay S."/>
            <person name="Blanchin S."/>
            <person name="Beckerich J.-M."/>
            <person name="Beyne E."/>
            <person name="Bleykasten C."/>
            <person name="Boisrame A."/>
            <person name="Boyer J."/>
            <person name="Cattolico L."/>
            <person name="Confanioleri F."/>
            <person name="de Daruvar A."/>
            <person name="Despons L."/>
            <person name="Fabre E."/>
            <person name="Fairhead C."/>
            <person name="Ferry-Dumazet H."/>
            <person name="Groppi A."/>
            <person name="Hantraye F."/>
            <person name="Hennequin C."/>
            <person name="Jauniaux N."/>
            <person name="Joyet P."/>
            <person name="Kachouri R."/>
            <person name="Kerrest A."/>
            <person name="Koszul R."/>
            <person name="Lemaire M."/>
            <person name="Lesur I."/>
            <person name="Ma L."/>
            <person name="Muller H."/>
            <person name="Nicaud J.-M."/>
            <person name="Nikolski M."/>
            <person name="Oztas S."/>
            <person name="Ozier-Kalogeropoulos O."/>
            <person name="Pellenz S."/>
            <person name="Potier S."/>
            <person name="Richard G.-F."/>
            <person name="Straub M.-L."/>
            <person name="Suleau A."/>
            <person name="Swennen D."/>
            <person name="Tekaia F."/>
            <person name="Wesolowski-Louvel M."/>
            <person name="Westhof E."/>
            <person name="Wirth B."/>
            <person name="Zeniou-Meyer M."/>
            <person name="Zivanovic Y."/>
            <person name="Bolotin-Fukuhara M."/>
            <person name="Thierry A."/>
            <person name="Bouchier C."/>
            <person name="Caudron B."/>
            <person name="Scarpelli C."/>
            <person name="Gaillardin C."/>
            <person name="Weissenbach J."/>
            <person name="Wincker P."/>
            <person name="Souciet J.-L."/>
        </authorList>
    </citation>
    <scope>NUCLEOTIDE SEQUENCE [LARGE SCALE GENOMIC DNA]</scope>
    <source>
        <strain>ATCC 8585 / CBS 2359 / DSM 70799 / NBRC 1267 / NRRL Y-1140 / WM37</strain>
    </source>
</reference>
<feature type="initiator methionine" description="Removed" evidence="1">
    <location>
        <position position="1"/>
    </location>
</feature>
<feature type="chain" id="PRO_0000071678" description="ATP synthase subunit d, mitochondrial">
    <location>
        <begin position="2"/>
        <end position="174"/>
    </location>
</feature>
<feature type="modified residue" description="N-acetylserine" evidence="1">
    <location>
        <position position="2"/>
    </location>
</feature>
<feature type="sequence conflict" description="In Ref. 1; AAC64861." evidence="2" ref="1">
    <original>R</original>
    <variation>I</variation>
    <location>
        <position position="42"/>
    </location>
</feature>
<proteinExistence type="inferred from homology"/>
<gene>
    <name type="primary">ATP7</name>
    <name type="ordered locus">KLLA0E18172g</name>
</gene>
<comment type="function">
    <text evidence="1">Mitochondrial membrane ATP synthase (F(1)F(0) ATP synthase or Complex V) produces ATP from ADP in the presence of a proton gradient across the membrane which is generated by electron transport complexes of the respiratory chain. F-type ATPases consist of two structural domains, F(1) - containing the extramembraneous catalytic core, and F(0) - containing the membrane proton channel, linked together by a central stalk and a peripheral stalk. During catalysis, ATP synthesis in the catalytic domain of F(1) is coupled via a rotary mechanism of the central stalk subunits to proton translocation. Part of the complex F(0) domain and the peripheric stalk, which acts as a stator to hold the catalytic alpha(3)beta(3) subcomplex and subunit a/ATP6 static relative to the rotary elements (By similarity).</text>
</comment>
<comment type="subcellular location">
    <subcellularLocation>
        <location evidence="1">Mitochondrion inner membrane</location>
        <topology evidence="1">Peripheral membrane protein</topology>
    </subcellularLocation>
</comment>
<comment type="similarity">
    <text evidence="2">Belongs to the ATPase d subunit family.</text>
</comment>
<accession>O13350</accession>
<accession>Q6CMS2</accession>
<name>ATP7_KLULA</name>
<keyword id="KW-0007">Acetylation</keyword>
<keyword id="KW-0066">ATP synthesis</keyword>
<keyword id="KW-0138">CF(0)</keyword>
<keyword id="KW-0375">Hydrogen ion transport</keyword>
<keyword id="KW-0406">Ion transport</keyword>
<keyword id="KW-0472">Membrane</keyword>
<keyword id="KW-0496">Mitochondrion</keyword>
<keyword id="KW-0999">Mitochondrion inner membrane</keyword>
<keyword id="KW-1185">Reference proteome</keyword>
<keyword id="KW-0813">Transport</keyword>